<comment type="function">
    <text evidence="2 8 9 10 12">Non-receptor tyrosine kinase that plays a redundant role with ITK in regulation of the adaptive immune response. Regulates the development, function and differentiation of conventional T-cells and nonconventional NKT-cells. When antigen presenting cells (APC) activate T-cell receptor (TCR), a series of phosphorylation leads to the recruitment of TXK to the cell membrane, where it is phosphorylated at Tyr-420. Phosphorylation leads to TXK full activation. Also contributes to signaling from many receptors and participates in multiple downstream pathways, including regulation of the actin cytoskeleton. Like ITK, can phosphorylate PLCG1, leading to its localization in lipid rafts and activation, followed by subsequent cleavage of its substrates. In turn, the endoplasmic reticulum releases calcium in the cytoplasm and the nuclear activator of activated T-cells (NFAT) translocates into the nucleus to perform its transcriptional duty. Plays a role in the positive regulation of IFNG transcription in T-helper 1 cells as part of an IFNG promoter-binding complex with PARP1 and EEF1A1 (By similarity). Within the complex, phosphorylates both PARP1 and EEF1A1 (By similarity). Also phosphorylates key sites in LCP2 leading to the up-regulation of Th1 preferred cytokine IL-2. Phosphorylates 'Tyr-201' of CTLA4 which leads to the association of PI-3 kinase with the CTLA4 receptor.</text>
</comment>
<comment type="catalytic activity">
    <reaction evidence="2">
        <text>L-tyrosyl-[protein] + ATP = O-phospho-L-tyrosyl-[protein] + ADP + H(+)</text>
        <dbReference type="Rhea" id="RHEA:10596"/>
        <dbReference type="Rhea" id="RHEA-COMP:10136"/>
        <dbReference type="Rhea" id="RHEA-COMP:20101"/>
        <dbReference type="ChEBI" id="CHEBI:15378"/>
        <dbReference type="ChEBI" id="CHEBI:30616"/>
        <dbReference type="ChEBI" id="CHEBI:46858"/>
        <dbReference type="ChEBI" id="CHEBI:61978"/>
        <dbReference type="ChEBI" id="CHEBI:456216"/>
        <dbReference type="EC" id="2.7.10.2"/>
    </reaction>
</comment>
<comment type="activity regulation">
    <text evidence="13">Activated by phosphorylation by FYN.</text>
</comment>
<comment type="subunit">
    <text evidence="2 9 11">Interacts with PARP1 and EEF1A1 (By similarity). Interacts with SH2D2A (PubMed:10587356). Interacts with FYN (PubMed:11353545).</text>
</comment>
<comment type="subcellular location">
    <subcellularLocation>
        <location evidence="1">Cytoplasm</location>
    </subcellularLocation>
    <subcellularLocation>
        <location evidence="1">Nucleus</location>
    </subcellularLocation>
    <subcellularLocation>
        <location>Cell membrane</location>
        <topology>Peripheral membrane protein</topology>
    </subcellularLocation>
    <text evidence="1">Localizes in the vicinity of cell surface receptors in the plasma membrane after receptor stimulation. Translocates into the nucleus and enhances IFN-gamma gene transcription in T-cells.</text>
</comment>
<comment type="alternative products">
    <event type="alternative initiation"/>
    <isoform>
        <id>P42682-1</id>
        <name>1</name>
        <sequence type="displayed"/>
    </isoform>
    <isoform>
        <id>P42682-2</id>
        <name>2</name>
        <sequence type="described" ref="VSP_041923"/>
    </isoform>
</comment>
<comment type="tissue specificity">
    <text>Expressed in early thymocytes, T-cells and mast cells.</text>
</comment>
<comment type="PTM">
    <text evidence="1">Phosphorylated at Tyr-420 by FYN. Autophosphorylation at Tyr-91 is critical for the activation of TXK, leading to the up-regulation of IFN-gamma gene transcription.</text>
</comment>
<comment type="PTM">
    <text evidence="13">The cysteine string at the N-terminus is palmitoylated and required for the proper subcellular location.</text>
</comment>
<comment type="miscellaneous">
    <molecule>Isoform 2</molecule>
    <text evidence="14">Produced by alternative initiation at Met-55 of isoform 1.</text>
</comment>
<comment type="similarity">
    <text evidence="3">Belongs to the protein kinase superfamily. Tyr protein kinase family. TEC subfamily.</text>
</comment>
<comment type="caution">
    <text evidence="14">Unlike the other TEC subfamily members, TXK is activated independently of the activity of phosphatidylinositol 3-kinase, consistent with its lack of a PH domain. Membrane association is performed through palmitoylation at the N-terminus.</text>
</comment>
<accession>P42682</accession>
<feature type="chain" id="PRO_0000088176" description="Tyrosine-protein kinase TXK">
    <location>
        <begin position="1"/>
        <end position="527"/>
    </location>
</feature>
<feature type="domain" description="SH3" evidence="5">
    <location>
        <begin position="82"/>
        <end position="142"/>
    </location>
</feature>
<feature type="domain" description="SH2" evidence="4">
    <location>
        <begin position="150"/>
        <end position="246"/>
    </location>
</feature>
<feature type="domain" description="Protein kinase" evidence="3">
    <location>
        <begin position="271"/>
        <end position="527"/>
    </location>
</feature>
<feature type="region of interest" description="Disordered" evidence="7">
    <location>
        <begin position="58"/>
        <end position="81"/>
    </location>
</feature>
<feature type="active site" description="Proton acceptor" evidence="3 6">
    <location>
        <position position="390"/>
    </location>
</feature>
<feature type="binding site" evidence="3">
    <location>
        <begin position="277"/>
        <end position="285"/>
    </location>
    <ligand>
        <name>ATP</name>
        <dbReference type="ChEBI" id="CHEBI:30616"/>
    </ligand>
</feature>
<feature type="binding site" evidence="3">
    <location>
        <position position="299"/>
    </location>
    <ligand>
        <name>ATP</name>
        <dbReference type="ChEBI" id="CHEBI:30616"/>
    </ligand>
</feature>
<feature type="modified residue" description="Phosphotyrosine; by autocatalysis" evidence="15">
    <location>
        <position position="91"/>
    </location>
</feature>
<feature type="modified residue" description="Phosphotyrosine; by FYN and autocatalysis" evidence="11 15">
    <location>
        <position position="420"/>
    </location>
</feature>
<feature type="splice variant" id="VSP_041923" description="In isoform 2." evidence="14">
    <location>
        <begin position="1"/>
        <end position="54"/>
    </location>
</feature>
<feature type="mutagenesis site" description="Reduces palmitoylation and leads to nuclear localization." evidence="13">
    <original>CCC</original>
    <variation>SLA</variation>
    <location>
        <begin position="16"/>
        <end position="18"/>
    </location>
</feature>
<feature type="sequence conflict" description="In Ref. 4; BAA07900." evidence="14" ref="4">
    <original>LS</original>
    <variation>SF</variation>
    <location>
        <begin position="3"/>
        <end position="4"/>
    </location>
</feature>
<feature type="sequence conflict" description="In Ref. 4; BAA07900." evidence="14" ref="4">
    <original>Y</original>
    <variation>D</variation>
    <location>
        <position position="6"/>
    </location>
</feature>
<feature type="sequence conflict" description="In Ref. 4; BAA07900." evidence="14" ref="4">
    <original>A</original>
    <variation>T</variation>
    <location>
        <position position="272"/>
    </location>
</feature>
<feature type="sequence conflict" description="In Ref. 4; BAA07900." evidence="14" ref="4">
    <original>R</original>
    <variation>S</variation>
    <location>
        <position position="497"/>
    </location>
</feature>
<protein>
    <recommendedName>
        <fullName>Tyrosine-protein kinase TXK</fullName>
        <ecNumber>2.7.10.2</ecNumber>
    </recommendedName>
    <alternativeName>
        <fullName>PTK-RL-18</fullName>
    </alternativeName>
    <alternativeName>
        <fullName>Resting lymphocyte kinase</fullName>
    </alternativeName>
</protein>
<reference key="1">
    <citation type="journal article" date="1995" name="Mamm. Genome">
        <title>The murine form of TXK, a novel TEC kinase expressed in thymus maps to chromosome 5.</title>
        <authorList>
            <person name="Haire R.N."/>
            <person name="Litman G.W."/>
        </authorList>
    </citation>
    <scope>NUCLEOTIDE SEQUENCE [MRNA]</scope>
    <source>
        <strain>C57BL/6J</strain>
        <tissue>Thymus</tissue>
    </source>
</reference>
<reference key="2">
    <citation type="journal article" date="1995" name="Oncogene">
        <title>Murine txk: a protein tyrosine kinase gene regulated by T cell activation.</title>
        <authorList>
            <person name="Sommers C.L."/>
            <person name="Huang K."/>
            <person name="Shores E.W."/>
            <person name="Grinberg A."/>
            <person name="Charlick D.A."/>
            <person name="Kozak C.A."/>
            <person name="Love P.E."/>
        </authorList>
    </citation>
    <scope>NUCLEOTIDE SEQUENCE [MRNA]</scope>
    <source>
        <strain>FVB/N</strain>
        <tissue>Thymus</tissue>
    </source>
</reference>
<reference key="3">
    <citation type="journal article" date="1995" name="J. Biol. Chem.">
        <title>Identification of Rlk, a novel protein tyrosine kinase with predominant expression in the T cell lineage.</title>
        <authorList>
            <person name="Hu Q."/>
            <person name="Davidson D."/>
            <person name="Schwartzberg P.L."/>
            <person name="Macchiarini F."/>
            <person name="Lenardo M.J."/>
            <person name="Bluestone J.A."/>
            <person name="Matis L.A."/>
        </authorList>
    </citation>
    <scope>NUCLEOTIDE SEQUENCE [MRNA]</scope>
    <source>
        <tissue>Thymus</tissue>
    </source>
</reference>
<reference key="4">
    <citation type="submission" date="1994-12" db="EMBL/GenBank/DDBJ databases">
        <authorList>
            <person name="Higashitsuji H."/>
            <person name="Nonoguchi K."/>
            <person name="Arii S."/>
            <person name="Furutani M."/>
            <person name="Kaneko Y."/>
            <person name="Nakayama H."/>
            <person name="Fujita J."/>
        </authorList>
    </citation>
    <scope>NUCLEOTIDE SEQUENCE [MRNA]</scope>
    <source>
        <strain>C57BL/6J</strain>
        <tissue>Liver</tissue>
    </source>
</reference>
<reference key="5">
    <citation type="journal article" date="1999" name="J. Exp. Med.">
        <title>RIBP, a novel Rlk/Txk- and Itk-binding adaptor protein that regulates T cell activation.</title>
        <authorList>
            <person name="Rajagopal K."/>
            <person name="Sommers C.L."/>
            <person name="Decker D.C."/>
            <person name="Mitchell E.O."/>
            <person name="Korthauer U."/>
            <person name="Sperling A.I."/>
            <person name="Kozak C.A."/>
            <person name="Love P.E."/>
            <person name="Bluestone J.A."/>
        </authorList>
    </citation>
    <scope>FUNCTION</scope>
    <scope>INTERACTION WITH SH2D2A</scope>
</reference>
<reference key="6">
    <citation type="journal article" date="1999" name="J. Exp. Med.">
        <title>A role for the Tec family tyrosine kinase Txk in T cell activation and thymocyte selection.</title>
        <authorList>
            <person name="Sommers C.L."/>
            <person name="Rabin R.L."/>
            <person name="Grinberg A."/>
            <person name="Tsay H.C."/>
            <person name="Farber J."/>
            <person name="Love P.E."/>
        </authorList>
    </citation>
    <scope>FUNCTION</scope>
</reference>
<reference key="7">
    <citation type="journal article" date="1999" name="Mol. Cell. Biol.">
        <title>rlk/TXK encodes two forms of a novel cysteine string tyrosine kinase activated by Src family kinases.</title>
        <authorList>
            <person name="Debnath J."/>
            <person name="Chamorro M."/>
            <person name="Czar M.J."/>
            <person name="Schaeffer E.M."/>
            <person name="Lenardo M.J."/>
            <person name="Varmus H.E."/>
            <person name="Schwartzberg P.L."/>
        </authorList>
    </citation>
    <scope>ALTERNATIVE INITIATION (ISOFORM 2)</scope>
    <scope>SUBCELLULAR LOCATION</scope>
    <scope>PALMITOYLATION</scope>
    <scope>MUTAGENESIS OF 16-CYS--CYS-18</scope>
    <scope>ACTIVITY REGULATION</scope>
</reference>
<reference key="8">
    <citation type="journal article" date="2000" name="J. Biol. Chem.">
        <title>Resting lymphocyte kinase (Rlk/Txk) targets lymphoid adaptor SLP-76 in the cooperative activation of interleukin-2 transcription in T-cells.</title>
        <authorList>
            <person name="Schneider H."/>
            <person name="Guerette B."/>
            <person name="Guntermann C."/>
            <person name="Rudd C.E."/>
        </authorList>
    </citation>
    <scope>FUNCTION IN PHOSPHORYLATION OF LCP2</scope>
</reference>
<reference key="9">
    <citation type="journal article" date="2001" name="BMC Immunol.">
        <title>Requirements for activation and RAFT localization of the T-lymphocyte kinase Rlk/Txk.</title>
        <authorList>
            <person name="Chamorro M."/>
            <person name="Czar M.J."/>
            <person name="Debnath J."/>
            <person name="Cheng G."/>
            <person name="Lenardo M.J."/>
            <person name="Varmus H.E."/>
            <person name="Schwartzberg P.L."/>
        </authorList>
    </citation>
    <scope>INTERACTION WITH FYN</scope>
    <scope>PHOSPHORYLATION AT TYR-420</scope>
    <scope>SUBCELLULAR LOCATION</scope>
</reference>
<reference key="10">
    <citation type="journal article" date="2007" name="J. Immunol.">
        <title>Quantitative time-resolved phosphoproteomic analysis of mast cell signaling.</title>
        <authorList>
            <person name="Cao L."/>
            <person name="Yu K."/>
            <person name="Banh C."/>
            <person name="Nguyen V."/>
            <person name="Ritz A."/>
            <person name="Raphael B.J."/>
            <person name="Kawakami Y."/>
            <person name="Kawakami T."/>
            <person name="Salomon A.R."/>
        </authorList>
    </citation>
    <scope>PHOSPHORYLATION [LARGE SCALE ANALYSIS] AT TYR-91 AND TYR-420</scope>
    <scope>IDENTIFICATION BY MASS SPECTROMETRY [LARGE SCALE ANALYSIS]</scope>
    <source>
        <tissue>Mast cell</tissue>
    </source>
</reference>
<reference key="11">
    <citation type="journal article" date="2008" name="J. Immunol.">
        <title>Selective expression rather than specific function of Txk and Itk regulate Th1 and Th2 responses.</title>
        <authorList>
            <person name="Sahu N."/>
            <person name="Venegas A.M."/>
            <person name="Jankovic D."/>
            <person name="Mitzner W."/>
            <person name="Gomez-Rodriguez J."/>
            <person name="Cannons J.L."/>
            <person name="Sommers C."/>
            <person name="Love P."/>
            <person name="Sher A."/>
            <person name="Schwartzberg P.L."/>
            <person name="August A."/>
        </authorList>
    </citation>
    <scope>FUNCTION</scope>
</reference>
<reference key="12">
    <citation type="journal article" date="2009" name="Immunol. Rev.">
        <title>Tec kinases regulate T-lymphocyte development and function: new insights into the roles of Itk and Rlk/Txk.</title>
        <authorList>
            <person name="Readinger J.A."/>
            <person name="Mueller K.L."/>
            <person name="Venegas A.M."/>
            <person name="Horai R."/>
            <person name="Schwartzberg P.L."/>
        </authorList>
    </citation>
    <scope>REVIEW ON FUNCTION</scope>
</reference>
<keyword id="KW-1064">Adaptive immunity</keyword>
<keyword id="KW-0024">Alternative initiation</keyword>
<keyword id="KW-0067">ATP-binding</keyword>
<keyword id="KW-1003">Cell membrane</keyword>
<keyword id="KW-0963">Cytoplasm</keyword>
<keyword id="KW-0391">Immunity</keyword>
<keyword id="KW-0418">Kinase</keyword>
<keyword id="KW-0449">Lipoprotein</keyword>
<keyword id="KW-0472">Membrane</keyword>
<keyword id="KW-0547">Nucleotide-binding</keyword>
<keyword id="KW-0539">Nucleus</keyword>
<keyword id="KW-0564">Palmitate</keyword>
<keyword id="KW-0597">Phosphoprotein</keyword>
<keyword id="KW-1185">Reference proteome</keyword>
<keyword id="KW-0727">SH2 domain</keyword>
<keyword id="KW-0728">SH3 domain</keyword>
<keyword id="KW-0804">Transcription</keyword>
<keyword id="KW-0805">Transcription regulation</keyword>
<keyword id="KW-0808">Transferase</keyword>
<keyword id="KW-0829">Tyrosine-protein kinase</keyword>
<organism>
    <name type="scientific">Mus musculus</name>
    <name type="common">Mouse</name>
    <dbReference type="NCBI Taxonomy" id="10090"/>
    <lineage>
        <taxon>Eukaryota</taxon>
        <taxon>Metazoa</taxon>
        <taxon>Chordata</taxon>
        <taxon>Craniata</taxon>
        <taxon>Vertebrata</taxon>
        <taxon>Euteleostomi</taxon>
        <taxon>Mammalia</taxon>
        <taxon>Eutheria</taxon>
        <taxon>Euarchontoglires</taxon>
        <taxon>Glires</taxon>
        <taxon>Rodentia</taxon>
        <taxon>Myomorpha</taxon>
        <taxon>Muroidea</taxon>
        <taxon>Muridae</taxon>
        <taxon>Murinae</taxon>
        <taxon>Mus</taxon>
        <taxon>Mus</taxon>
    </lineage>
</organism>
<dbReference type="EC" id="2.7.10.2"/>
<dbReference type="EMBL" id="U16145">
    <property type="protein sequence ID" value="AAC52264.1"/>
    <property type="molecule type" value="mRNA"/>
</dbReference>
<dbReference type="EMBL" id="U19607">
    <property type="protein sequence ID" value="AAA86698.1"/>
    <property type="molecule type" value="mRNA"/>
</dbReference>
<dbReference type="EMBL" id="L35268">
    <property type="protein sequence ID" value="AAA67039.1"/>
    <property type="molecule type" value="mRNA"/>
</dbReference>
<dbReference type="EMBL" id="D43964">
    <property type="protein sequence ID" value="BAA07900.1"/>
    <property type="molecule type" value="mRNA"/>
</dbReference>
<dbReference type="CCDS" id="CCDS51514.1">
    <molecule id="P42682-1"/>
</dbReference>
<dbReference type="CCDS" id="CCDS80298.1">
    <molecule id="P42682-2"/>
</dbReference>
<dbReference type="PIR" id="I49133">
    <property type="entry name" value="I49133"/>
</dbReference>
<dbReference type="RefSeq" id="NP_001116226.1">
    <molecule id="P42682-1"/>
    <property type="nucleotide sequence ID" value="NM_001122754.2"/>
</dbReference>
<dbReference type="RefSeq" id="NP_001276424.1">
    <molecule id="P42682-2"/>
    <property type="nucleotide sequence ID" value="NM_001289495.1"/>
</dbReference>
<dbReference type="RefSeq" id="XP_011239024.1">
    <molecule id="P42682-2"/>
    <property type="nucleotide sequence ID" value="XM_011240722.1"/>
</dbReference>
<dbReference type="BMRB" id="P42682"/>
<dbReference type="SMR" id="P42682"/>
<dbReference type="BioGRID" id="204388">
    <property type="interactions" value="14"/>
</dbReference>
<dbReference type="FunCoup" id="P42682">
    <property type="interactions" value="1327"/>
</dbReference>
<dbReference type="STRING" id="10090.ENSMUSP00000129397"/>
<dbReference type="iPTMnet" id="P42682"/>
<dbReference type="PhosphoSitePlus" id="P42682"/>
<dbReference type="SwissPalm" id="P42682"/>
<dbReference type="PaxDb" id="10090-ENSMUSP00000129397"/>
<dbReference type="ProteomicsDB" id="298039">
    <molecule id="P42682-1"/>
</dbReference>
<dbReference type="ProteomicsDB" id="298040">
    <molecule id="P42682-2"/>
</dbReference>
<dbReference type="Pumba" id="P42682"/>
<dbReference type="Antibodypedia" id="23802">
    <property type="antibodies" value="273 antibodies from 33 providers"/>
</dbReference>
<dbReference type="DNASU" id="22165"/>
<dbReference type="Ensembl" id="ENSMUST00000113604.10">
    <molecule id="P42682-1"/>
    <property type="protein sequence ID" value="ENSMUSP00000109234.4"/>
    <property type="gene ID" value="ENSMUSG00000054892.15"/>
</dbReference>
<dbReference type="Ensembl" id="ENSMUST00000198464.3">
    <molecule id="P42682-2"/>
    <property type="protein sequence ID" value="ENSMUSP00000143002.2"/>
    <property type="gene ID" value="ENSMUSG00000054892.15"/>
</dbReference>
<dbReference type="GeneID" id="22165"/>
<dbReference type="KEGG" id="mmu:22165"/>
<dbReference type="UCSC" id="uc008xrx.3">
    <molecule id="P42682-1"/>
    <property type="organism name" value="mouse"/>
</dbReference>
<dbReference type="AGR" id="MGI:102960"/>
<dbReference type="CTD" id="7294"/>
<dbReference type="MGI" id="MGI:102960">
    <property type="gene designation" value="Txk"/>
</dbReference>
<dbReference type="VEuPathDB" id="HostDB:ENSMUSG00000054892"/>
<dbReference type="eggNOG" id="KOG0197">
    <property type="taxonomic scope" value="Eukaryota"/>
</dbReference>
<dbReference type="GeneTree" id="ENSGT00940000160857"/>
<dbReference type="InParanoid" id="P42682"/>
<dbReference type="OrthoDB" id="4062651at2759"/>
<dbReference type="PhylomeDB" id="P42682"/>
<dbReference type="TreeFam" id="TF351634"/>
<dbReference type="BRENDA" id="2.7.10.2">
    <property type="organism ID" value="3474"/>
</dbReference>
<dbReference type="Reactome" id="R-MMU-2871809">
    <property type="pathway name" value="FCERI mediated Ca+2 mobilization"/>
</dbReference>
<dbReference type="BioGRID-ORCS" id="22165">
    <property type="hits" value="1 hit in 79 CRISPR screens"/>
</dbReference>
<dbReference type="ChiTaRS" id="Txk">
    <property type="organism name" value="mouse"/>
</dbReference>
<dbReference type="PRO" id="PR:P42682"/>
<dbReference type="Proteomes" id="UP000000589">
    <property type="component" value="Chromosome 5"/>
</dbReference>
<dbReference type="RNAct" id="P42682">
    <property type="molecule type" value="protein"/>
</dbReference>
<dbReference type="Bgee" id="ENSMUSG00000054892">
    <property type="expression patterns" value="Expressed in thymus and 39 other cell types or tissues"/>
</dbReference>
<dbReference type="ExpressionAtlas" id="P42682">
    <property type="expression patterns" value="baseline and differential"/>
</dbReference>
<dbReference type="GO" id="GO:0005737">
    <property type="term" value="C:cytoplasm"/>
    <property type="evidence" value="ECO:0007669"/>
    <property type="project" value="UniProtKB-SubCell"/>
</dbReference>
<dbReference type="GO" id="GO:0005634">
    <property type="term" value="C:nucleus"/>
    <property type="evidence" value="ECO:0007669"/>
    <property type="project" value="UniProtKB-SubCell"/>
</dbReference>
<dbReference type="GO" id="GO:0005886">
    <property type="term" value="C:plasma membrane"/>
    <property type="evidence" value="ECO:0007669"/>
    <property type="project" value="UniProtKB-SubCell"/>
</dbReference>
<dbReference type="GO" id="GO:0005524">
    <property type="term" value="F:ATP binding"/>
    <property type="evidence" value="ECO:0007669"/>
    <property type="project" value="UniProtKB-KW"/>
</dbReference>
<dbReference type="GO" id="GO:0004715">
    <property type="term" value="F:non-membrane spanning protein tyrosine kinase activity"/>
    <property type="evidence" value="ECO:0007669"/>
    <property type="project" value="UniProtKB-EC"/>
</dbReference>
<dbReference type="GO" id="GO:0002250">
    <property type="term" value="P:adaptive immune response"/>
    <property type="evidence" value="ECO:0000315"/>
    <property type="project" value="UniProtKB"/>
</dbReference>
<dbReference type="GO" id="GO:0001865">
    <property type="term" value="P:NK T cell differentiation"/>
    <property type="evidence" value="ECO:0000316"/>
    <property type="project" value="MGI"/>
</dbReference>
<dbReference type="GO" id="GO:0001819">
    <property type="term" value="P:positive regulation of cytokine production"/>
    <property type="evidence" value="ECO:0000315"/>
    <property type="project" value="UniProtKB"/>
</dbReference>
<dbReference type="GO" id="GO:0050852">
    <property type="term" value="P:T cell receptor signaling pathway"/>
    <property type="evidence" value="ECO:0000315"/>
    <property type="project" value="UniProtKB"/>
</dbReference>
<dbReference type="CDD" id="cd10398">
    <property type="entry name" value="SH2_Tec_Txk"/>
    <property type="match status" value="1"/>
</dbReference>
<dbReference type="CDD" id="cd11907">
    <property type="entry name" value="SH3_TXK"/>
    <property type="match status" value="1"/>
</dbReference>
<dbReference type="FunFam" id="1.10.510.10:FF:000052">
    <property type="entry name" value="Tyrosine-protein kinase"/>
    <property type="match status" value="1"/>
</dbReference>
<dbReference type="FunFam" id="3.30.200.20:FF:000053">
    <property type="entry name" value="Tyrosine-protein kinase"/>
    <property type="match status" value="1"/>
</dbReference>
<dbReference type="FunFam" id="3.30.505.10:FF:000045">
    <property type="entry name" value="Tyrosine-protein kinase"/>
    <property type="match status" value="1"/>
</dbReference>
<dbReference type="Gene3D" id="3.30.505.10">
    <property type="entry name" value="SH2 domain"/>
    <property type="match status" value="1"/>
</dbReference>
<dbReference type="Gene3D" id="2.30.30.40">
    <property type="entry name" value="SH3 Domains"/>
    <property type="match status" value="1"/>
</dbReference>
<dbReference type="Gene3D" id="1.10.510.10">
    <property type="entry name" value="Transferase(Phosphotransferase) domain 1"/>
    <property type="match status" value="1"/>
</dbReference>
<dbReference type="InterPro" id="IPR011009">
    <property type="entry name" value="Kinase-like_dom_sf"/>
</dbReference>
<dbReference type="InterPro" id="IPR050198">
    <property type="entry name" value="Non-receptor_tyrosine_kinases"/>
</dbReference>
<dbReference type="InterPro" id="IPR000719">
    <property type="entry name" value="Prot_kinase_dom"/>
</dbReference>
<dbReference type="InterPro" id="IPR017441">
    <property type="entry name" value="Protein_kinase_ATP_BS"/>
</dbReference>
<dbReference type="InterPro" id="IPR001245">
    <property type="entry name" value="Ser-Thr/Tyr_kinase_cat_dom"/>
</dbReference>
<dbReference type="InterPro" id="IPR000980">
    <property type="entry name" value="SH2"/>
</dbReference>
<dbReference type="InterPro" id="IPR036860">
    <property type="entry name" value="SH2_dom_sf"/>
</dbReference>
<dbReference type="InterPro" id="IPR036028">
    <property type="entry name" value="SH3-like_dom_sf"/>
</dbReference>
<dbReference type="InterPro" id="IPR001452">
    <property type="entry name" value="SH3_domain"/>
</dbReference>
<dbReference type="InterPro" id="IPR035870">
    <property type="entry name" value="Txk_SH2"/>
</dbReference>
<dbReference type="InterPro" id="IPR035579">
    <property type="entry name" value="TXK_SH3"/>
</dbReference>
<dbReference type="InterPro" id="IPR008266">
    <property type="entry name" value="Tyr_kinase_AS"/>
</dbReference>
<dbReference type="InterPro" id="IPR020635">
    <property type="entry name" value="Tyr_kinase_cat_dom"/>
</dbReference>
<dbReference type="PANTHER" id="PTHR24418">
    <property type="entry name" value="TYROSINE-PROTEIN KINASE"/>
    <property type="match status" value="1"/>
</dbReference>
<dbReference type="Pfam" id="PF07714">
    <property type="entry name" value="PK_Tyr_Ser-Thr"/>
    <property type="match status" value="1"/>
</dbReference>
<dbReference type="Pfam" id="PF00017">
    <property type="entry name" value="SH2"/>
    <property type="match status" value="1"/>
</dbReference>
<dbReference type="Pfam" id="PF00018">
    <property type="entry name" value="SH3_1"/>
    <property type="match status" value="1"/>
</dbReference>
<dbReference type="PRINTS" id="PR00401">
    <property type="entry name" value="SH2DOMAIN"/>
</dbReference>
<dbReference type="PRINTS" id="PR00109">
    <property type="entry name" value="TYRKINASE"/>
</dbReference>
<dbReference type="SMART" id="SM00252">
    <property type="entry name" value="SH2"/>
    <property type="match status" value="1"/>
</dbReference>
<dbReference type="SMART" id="SM00326">
    <property type="entry name" value="SH3"/>
    <property type="match status" value="1"/>
</dbReference>
<dbReference type="SMART" id="SM00219">
    <property type="entry name" value="TyrKc"/>
    <property type="match status" value="1"/>
</dbReference>
<dbReference type="SUPFAM" id="SSF56112">
    <property type="entry name" value="Protein kinase-like (PK-like)"/>
    <property type="match status" value="1"/>
</dbReference>
<dbReference type="SUPFAM" id="SSF55550">
    <property type="entry name" value="SH2 domain"/>
    <property type="match status" value="1"/>
</dbReference>
<dbReference type="SUPFAM" id="SSF50044">
    <property type="entry name" value="SH3-domain"/>
    <property type="match status" value="1"/>
</dbReference>
<dbReference type="PROSITE" id="PS00107">
    <property type="entry name" value="PROTEIN_KINASE_ATP"/>
    <property type="match status" value="1"/>
</dbReference>
<dbReference type="PROSITE" id="PS50011">
    <property type="entry name" value="PROTEIN_KINASE_DOM"/>
    <property type="match status" value="1"/>
</dbReference>
<dbReference type="PROSITE" id="PS00109">
    <property type="entry name" value="PROTEIN_KINASE_TYR"/>
    <property type="match status" value="1"/>
</dbReference>
<dbReference type="PROSITE" id="PS50001">
    <property type="entry name" value="SH2"/>
    <property type="match status" value="1"/>
</dbReference>
<dbReference type="PROSITE" id="PS50002">
    <property type="entry name" value="SH3"/>
    <property type="match status" value="1"/>
</dbReference>
<evidence type="ECO:0000250" key="1"/>
<evidence type="ECO:0000250" key="2">
    <source>
        <dbReference type="UniProtKB" id="P42681"/>
    </source>
</evidence>
<evidence type="ECO:0000255" key="3">
    <source>
        <dbReference type="PROSITE-ProRule" id="PRU00159"/>
    </source>
</evidence>
<evidence type="ECO:0000255" key="4">
    <source>
        <dbReference type="PROSITE-ProRule" id="PRU00191"/>
    </source>
</evidence>
<evidence type="ECO:0000255" key="5">
    <source>
        <dbReference type="PROSITE-ProRule" id="PRU00192"/>
    </source>
</evidence>
<evidence type="ECO:0000255" key="6">
    <source>
        <dbReference type="PROSITE-ProRule" id="PRU10028"/>
    </source>
</evidence>
<evidence type="ECO:0000256" key="7">
    <source>
        <dbReference type="SAM" id="MobiDB-lite"/>
    </source>
</evidence>
<evidence type="ECO:0000269" key="8">
    <source>
    </source>
</evidence>
<evidence type="ECO:0000269" key="9">
    <source>
    </source>
</evidence>
<evidence type="ECO:0000269" key="10">
    <source>
    </source>
</evidence>
<evidence type="ECO:0000269" key="11">
    <source>
    </source>
</evidence>
<evidence type="ECO:0000269" key="12">
    <source>
    </source>
</evidence>
<evidence type="ECO:0000269" key="13">
    <source>
    </source>
</evidence>
<evidence type="ECO:0000305" key="14"/>
<evidence type="ECO:0007744" key="15">
    <source>
    </source>
</evidence>
<name>TXK_MOUSE</name>
<sequence length="527" mass="61108">MILSSYSSFQSVLCCCCCRCSVQKRQVRTQISLSREEELSEKHSQRQRPWFAKLMGKTQSNRGGVQPSKRKPLPPLPQEPPDERIQVKALYDFLPREPGNLALKRAEEYLILERCDPHWWKARDRFGNEGLIPSNYVTENRLANLEIYEWYHKNITRNQTERLLRQEAKEGAFIVRDSRHLGSYTISVFTRARRHTQSSIKHYQIKKNDSGQWYITERHLFPSVPELIQYHQYNAAGLISRLRYPIGLLGSCLPATSGFSYEKWEIDPSELAFVKEIGSGQFGVVHLGEWRAHIPVAIKAINEGSMSEEDFIEEAKVMMKLSHSRLVQLYGVCIQQKPLYIVTEFMENGCLLDYLRERKGQLQKALLLSMCQDICEGMAYLERSCYIHRDLAARNCLVSSACVVKISDFGMARYVLDDEYISSSGAKFPVKWCPPEVFHFNKYSSKSDVWSFGVLMWEVFTEGKMPFENKSNLQVVEAISQGFRLYRPHLAPMTIYRVMYSCWHESPKGRPTFAELLQVLTEIAETW</sequence>
<proteinExistence type="evidence at protein level"/>
<gene>
    <name type="primary">Txk</name>
    <name type="synonym">Rlk</name>
</gene>